<reference key="1">
    <citation type="submission" date="2006-09" db="EMBL/GenBank/DDBJ databases">
        <title>Complete sequence of Rhodopseudomonas palustris BisA53.</title>
        <authorList>
            <consortium name="US DOE Joint Genome Institute"/>
            <person name="Copeland A."/>
            <person name="Lucas S."/>
            <person name="Lapidus A."/>
            <person name="Barry K."/>
            <person name="Detter J.C."/>
            <person name="Glavina del Rio T."/>
            <person name="Hammon N."/>
            <person name="Israni S."/>
            <person name="Dalin E."/>
            <person name="Tice H."/>
            <person name="Pitluck S."/>
            <person name="Chain P."/>
            <person name="Malfatti S."/>
            <person name="Shin M."/>
            <person name="Vergez L."/>
            <person name="Schmutz J."/>
            <person name="Larimer F."/>
            <person name="Land M."/>
            <person name="Hauser L."/>
            <person name="Pelletier D.A."/>
            <person name="Kyrpides N."/>
            <person name="Kim E."/>
            <person name="Harwood C.S."/>
            <person name="Oda Y."/>
            <person name="Richardson P."/>
        </authorList>
    </citation>
    <scope>NUCLEOTIDE SEQUENCE [LARGE SCALE GENOMIC DNA]</scope>
    <source>
        <strain>BisA53</strain>
    </source>
</reference>
<organism>
    <name type="scientific">Rhodopseudomonas palustris (strain BisA53)</name>
    <dbReference type="NCBI Taxonomy" id="316055"/>
    <lineage>
        <taxon>Bacteria</taxon>
        <taxon>Pseudomonadati</taxon>
        <taxon>Pseudomonadota</taxon>
        <taxon>Alphaproteobacteria</taxon>
        <taxon>Hyphomicrobiales</taxon>
        <taxon>Nitrobacteraceae</taxon>
        <taxon>Rhodopseudomonas</taxon>
    </lineage>
</organism>
<proteinExistence type="inferred from homology"/>
<keyword id="KW-0687">Ribonucleoprotein</keyword>
<keyword id="KW-0689">Ribosomal protein</keyword>
<keyword id="KW-0694">RNA-binding</keyword>
<keyword id="KW-0699">rRNA-binding</keyword>
<feature type="chain" id="PRO_1000005574" description="Large ribosomal subunit protein uL10">
    <location>
        <begin position="1"/>
        <end position="172"/>
    </location>
</feature>
<comment type="function">
    <text evidence="1">Forms part of the ribosomal stalk, playing a central role in the interaction of the ribosome with GTP-bound translation factors.</text>
</comment>
<comment type="subunit">
    <text evidence="1">Part of the ribosomal stalk of the 50S ribosomal subunit. The N-terminus interacts with L11 and the large rRNA to form the base of the stalk. The C-terminus forms an elongated spine to which L12 dimers bind in a sequential fashion forming a multimeric L10(L12)X complex.</text>
</comment>
<comment type="similarity">
    <text evidence="1">Belongs to the universal ribosomal protein uL10 family.</text>
</comment>
<name>RL10_RHOP5</name>
<gene>
    <name evidence="1" type="primary">rplJ</name>
    <name type="ordered locus">RPE_3599</name>
</gene>
<evidence type="ECO:0000255" key="1">
    <source>
        <dbReference type="HAMAP-Rule" id="MF_00362"/>
    </source>
</evidence>
<evidence type="ECO:0000305" key="2"/>
<dbReference type="EMBL" id="CP000463">
    <property type="protein sequence ID" value="ABJ07529.1"/>
    <property type="molecule type" value="Genomic_DNA"/>
</dbReference>
<dbReference type="SMR" id="Q07KK5"/>
<dbReference type="STRING" id="316055.RPE_3599"/>
<dbReference type="KEGG" id="rpe:RPE_3599"/>
<dbReference type="eggNOG" id="COG0244">
    <property type="taxonomic scope" value="Bacteria"/>
</dbReference>
<dbReference type="HOGENOM" id="CLU_092227_0_0_5"/>
<dbReference type="OrthoDB" id="9791972at2"/>
<dbReference type="GO" id="GO:0015934">
    <property type="term" value="C:large ribosomal subunit"/>
    <property type="evidence" value="ECO:0007669"/>
    <property type="project" value="InterPro"/>
</dbReference>
<dbReference type="GO" id="GO:0070180">
    <property type="term" value="F:large ribosomal subunit rRNA binding"/>
    <property type="evidence" value="ECO:0007669"/>
    <property type="project" value="UniProtKB-UniRule"/>
</dbReference>
<dbReference type="GO" id="GO:0003735">
    <property type="term" value="F:structural constituent of ribosome"/>
    <property type="evidence" value="ECO:0007669"/>
    <property type="project" value="InterPro"/>
</dbReference>
<dbReference type="GO" id="GO:0006412">
    <property type="term" value="P:translation"/>
    <property type="evidence" value="ECO:0007669"/>
    <property type="project" value="UniProtKB-UniRule"/>
</dbReference>
<dbReference type="CDD" id="cd05797">
    <property type="entry name" value="Ribosomal_L10"/>
    <property type="match status" value="1"/>
</dbReference>
<dbReference type="Gene3D" id="3.30.70.1730">
    <property type="match status" value="1"/>
</dbReference>
<dbReference type="Gene3D" id="6.10.250.290">
    <property type="match status" value="1"/>
</dbReference>
<dbReference type="HAMAP" id="MF_00362">
    <property type="entry name" value="Ribosomal_uL10"/>
    <property type="match status" value="1"/>
</dbReference>
<dbReference type="InterPro" id="IPR001790">
    <property type="entry name" value="Ribosomal_uL10"/>
</dbReference>
<dbReference type="InterPro" id="IPR043141">
    <property type="entry name" value="Ribosomal_uL10-like_sf"/>
</dbReference>
<dbReference type="InterPro" id="IPR022973">
    <property type="entry name" value="Ribosomal_uL10_bac"/>
</dbReference>
<dbReference type="InterPro" id="IPR047865">
    <property type="entry name" value="Ribosomal_uL10_bac_type"/>
</dbReference>
<dbReference type="InterPro" id="IPR002363">
    <property type="entry name" value="Ribosomal_uL10_CS_bac"/>
</dbReference>
<dbReference type="NCBIfam" id="NF000955">
    <property type="entry name" value="PRK00099.1-1"/>
    <property type="match status" value="1"/>
</dbReference>
<dbReference type="PANTHER" id="PTHR11560">
    <property type="entry name" value="39S RIBOSOMAL PROTEIN L10, MITOCHONDRIAL"/>
    <property type="match status" value="1"/>
</dbReference>
<dbReference type="Pfam" id="PF00466">
    <property type="entry name" value="Ribosomal_L10"/>
    <property type="match status" value="1"/>
</dbReference>
<dbReference type="SUPFAM" id="SSF160369">
    <property type="entry name" value="Ribosomal protein L10-like"/>
    <property type="match status" value="1"/>
</dbReference>
<dbReference type="PROSITE" id="PS01109">
    <property type="entry name" value="RIBOSOMAL_L10"/>
    <property type="match status" value="1"/>
</dbReference>
<protein>
    <recommendedName>
        <fullName evidence="1">Large ribosomal subunit protein uL10</fullName>
    </recommendedName>
    <alternativeName>
        <fullName evidence="2">50S ribosomal protein L10</fullName>
    </alternativeName>
</protein>
<accession>Q07KK5</accession>
<sequence>MEKAAKKEAVESLNGLFKTTSVAVVAHYSGLTVAQMQKLRSQMKLAGASVKVSKNRLAKIALEGTDVVAIGSLLKGPTVIATSNDPVAAPKVAVEFAKANEKFVILGGSMGTTVLNVDGVKALASLPSLDELRAKLVGLLVAPATKIAQLTTAPASKLARVVQAYASKDEAA</sequence>